<protein>
    <recommendedName>
        <fullName>Prolactin-7D1</fullName>
    </recommendedName>
    <alternativeName>
        <fullName>Proliferin-related protein</fullName>
        <shortName>PRP</shortName>
    </alternativeName>
</protein>
<feature type="signal peptide" evidence="2">
    <location>
        <begin position="1"/>
        <end position="30"/>
    </location>
</feature>
<feature type="chain" id="PRO_0000032970" description="Prolactin-7D1">
    <location>
        <begin position="31"/>
        <end position="244"/>
    </location>
</feature>
<feature type="disulfide bond" evidence="1">
    <location>
        <begin position="99"/>
        <end position="215"/>
    </location>
</feature>
<feature type="disulfide bond" evidence="1">
    <location>
        <begin position="232"/>
        <end position="240"/>
    </location>
</feature>
<organism>
    <name type="scientific">Mus musculus</name>
    <name type="common">Mouse</name>
    <dbReference type="NCBI Taxonomy" id="10090"/>
    <lineage>
        <taxon>Eukaryota</taxon>
        <taxon>Metazoa</taxon>
        <taxon>Chordata</taxon>
        <taxon>Craniata</taxon>
        <taxon>Vertebrata</taxon>
        <taxon>Euteleostomi</taxon>
        <taxon>Mammalia</taxon>
        <taxon>Eutheria</taxon>
        <taxon>Euarchontoglires</taxon>
        <taxon>Glires</taxon>
        <taxon>Rodentia</taxon>
        <taxon>Myomorpha</taxon>
        <taxon>Muroidea</taxon>
        <taxon>Muridae</taxon>
        <taxon>Murinae</taxon>
        <taxon>Mus</taxon>
        <taxon>Mus</taxon>
    </lineage>
</organism>
<evidence type="ECO:0000250" key="1"/>
<evidence type="ECO:0000255" key="2"/>
<evidence type="ECO:0000305" key="3"/>
<gene>
    <name type="primary">Prl7d1</name>
    <name type="synonym">Plfr</name>
</gene>
<reference key="1">
    <citation type="journal article" date="1985" name="EMBO J.">
        <title>A new member of the prolactin-growth hormone gene family expressed in mouse placenta.</title>
        <authorList>
            <person name="Linzer D.I.H."/>
            <person name="Nathans D."/>
        </authorList>
    </citation>
    <scope>NUCLEOTIDE SEQUENCE [MRNA]</scope>
</reference>
<reference key="2">
    <citation type="journal article" date="2005" name="Science">
        <title>The transcriptional landscape of the mammalian genome.</title>
        <authorList>
            <person name="Carninci P."/>
            <person name="Kasukawa T."/>
            <person name="Katayama S."/>
            <person name="Gough J."/>
            <person name="Frith M.C."/>
            <person name="Maeda N."/>
            <person name="Oyama R."/>
            <person name="Ravasi T."/>
            <person name="Lenhard B."/>
            <person name="Wells C."/>
            <person name="Kodzius R."/>
            <person name="Shimokawa K."/>
            <person name="Bajic V.B."/>
            <person name="Brenner S.E."/>
            <person name="Batalov S."/>
            <person name="Forrest A.R."/>
            <person name="Zavolan M."/>
            <person name="Davis M.J."/>
            <person name="Wilming L.G."/>
            <person name="Aidinis V."/>
            <person name="Allen J.E."/>
            <person name="Ambesi-Impiombato A."/>
            <person name="Apweiler R."/>
            <person name="Aturaliya R.N."/>
            <person name="Bailey T.L."/>
            <person name="Bansal M."/>
            <person name="Baxter L."/>
            <person name="Beisel K.W."/>
            <person name="Bersano T."/>
            <person name="Bono H."/>
            <person name="Chalk A.M."/>
            <person name="Chiu K.P."/>
            <person name="Choudhary V."/>
            <person name="Christoffels A."/>
            <person name="Clutterbuck D.R."/>
            <person name="Crowe M.L."/>
            <person name="Dalla E."/>
            <person name="Dalrymple B.P."/>
            <person name="de Bono B."/>
            <person name="Della Gatta G."/>
            <person name="di Bernardo D."/>
            <person name="Down T."/>
            <person name="Engstrom P."/>
            <person name="Fagiolini M."/>
            <person name="Faulkner G."/>
            <person name="Fletcher C.F."/>
            <person name="Fukushima T."/>
            <person name="Furuno M."/>
            <person name="Futaki S."/>
            <person name="Gariboldi M."/>
            <person name="Georgii-Hemming P."/>
            <person name="Gingeras T.R."/>
            <person name="Gojobori T."/>
            <person name="Green R.E."/>
            <person name="Gustincich S."/>
            <person name="Harbers M."/>
            <person name="Hayashi Y."/>
            <person name="Hensch T.K."/>
            <person name="Hirokawa N."/>
            <person name="Hill D."/>
            <person name="Huminiecki L."/>
            <person name="Iacono M."/>
            <person name="Ikeo K."/>
            <person name="Iwama A."/>
            <person name="Ishikawa T."/>
            <person name="Jakt M."/>
            <person name="Kanapin A."/>
            <person name="Katoh M."/>
            <person name="Kawasawa Y."/>
            <person name="Kelso J."/>
            <person name="Kitamura H."/>
            <person name="Kitano H."/>
            <person name="Kollias G."/>
            <person name="Krishnan S.P."/>
            <person name="Kruger A."/>
            <person name="Kummerfeld S.K."/>
            <person name="Kurochkin I.V."/>
            <person name="Lareau L.F."/>
            <person name="Lazarevic D."/>
            <person name="Lipovich L."/>
            <person name="Liu J."/>
            <person name="Liuni S."/>
            <person name="McWilliam S."/>
            <person name="Madan Babu M."/>
            <person name="Madera M."/>
            <person name="Marchionni L."/>
            <person name="Matsuda H."/>
            <person name="Matsuzawa S."/>
            <person name="Miki H."/>
            <person name="Mignone F."/>
            <person name="Miyake S."/>
            <person name="Morris K."/>
            <person name="Mottagui-Tabar S."/>
            <person name="Mulder N."/>
            <person name="Nakano N."/>
            <person name="Nakauchi H."/>
            <person name="Ng P."/>
            <person name="Nilsson R."/>
            <person name="Nishiguchi S."/>
            <person name="Nishikawa S."/>
            <person name="Nori F."/>
            <person name="Ohara O."/>
            <person name="Okazaki Y."/>
            <person name="Orlando V."/>
            <person name="Pang K.C."/>
            <person name="Pavan W.J."/>
            <person name="Pavesi G."/>
            <person name="Pesole G."/>
            <person name="Petrovsky N."/>
            <person name="Piazza S."/>
            <person name="Reed J."/>
            <person name="Reid J.F."/>
            <person name="Ring B.Z."/>
            <person name="Ringwald M."/>
            <person name="Rost B."/>
            <person name="Ruan Y."/>
            <person name="Salzberg S.L."/>
            <person name="Sandelin A."/>
            <person name="Schneider C."/>
            <person name="Schoenbach C."/>
            <person name="Sekiguchi K."/>
            <person name="Semple C.A."/>
            <person name="Seno S."/>
            <person name="Sessa L."/>
            <person name="Sheng Y."/>
            <person name="Shibata Y."/>
            <person name="Shimada H."/>
            <person name="Shimada K."/>
            <person name="Silva D."/>
            <person name="Sinclair B."/>
            <person name="Sperling S."/>
            <person name="Stupka E."/>
            <person name="Sugiura K."/>
            <person name="Sultana R."/>
            <person name="Takenaka Y."/>
            <person name="Taki K."/>
            <person name="Tammoja K."/>
            <person name="Tan S.L."/>
            <person name="Tang S."/>
            <person name="Taylor M.S."/>
            <person name="Tegner J."/>
            <person name="Teichmann S.A."/>
            <person name="Ueda H.R."/>
            <person name="van Nimwegen E."/>
            <person name="Verardo R."/>
            <person name="Wei C.L."/>
            <person name="Yagi K."/>
            <person name="Yamanishi H."/>
            <person name="Zabarovsky E."/>
            <person name="Zhu S."/>
            <person name="Zimmer A."/>
            <person name="Hide W."/>
            <person name="Bult C."/>
            <person name="Grimmond S.M."/>
            <person name="Teasdale R.D."/>
            <person name="Liu E.T."/>
            <person name="Brusic V."/>
            <person name="Quackenbush J."/>
            <person name="Wahlestedt C."/>
            <person name="Mattick J.S."/>
            <person name="Hume D.A."/>
            <person name="Kai C."/>
            <person name="Sasaki D."/>
            <person name="Tomaru Y."/>
            <person name="Fukuda S."/>
            <person name="Kanamori-Katayama M."/>
            <person name="Suzuki M."/>
            <person name="Aoki J."/>
            <person name="Arakawa T."/>
            <person name="Iida J."/>
            <person name="Imamura K."/>
            <person name="Itoh M."/>
            <person name="Kato T."/>
            <person name="Kawaji H."/>
            <person name="Kawagashira N."/>
            <person name="Kawashima T."/>
            <person name="Kojima M."/>
            <person name="Kondo S."/>
            <person name="Konno H."/>
            <person name="Nakano K."/>
            <person name="Ninomiya N."/>
            <person name="Nishio T."/>
            <person name="Okada M."/>
            <person name="Plessy C."/>
            <person name="Shibata K."/>
            <person name="Shiraki T."/>
            <person name="Suzuki S."/>
            <person name="Tagami M."/>
            <person name="Waki K."/>
            <person name="Watahiki A."/>
            <person name="Okamura-Oho Y."/>
            <person name="Suzuki H."/>
            <person name="Kawai J."/>
            <person name="Hayashizaki Y."/>
        </authorList>
    </citation>
    <scope>NUCLEOTIDE SEQUENCE [LARGE SCALE MRNA]</scope>
    <source>
        <strain>C57BL/6J</strain>
        <tissue>Placenta</tissue>
    </source>
</reference>
<dbReference type="EMBL" id="X02594">
    <property type="protein sequence ID" value="CAA26437.1"/>
    <property type="molecule type" value="mRNA"/>
</dbReference>
<dbReference type="EMBL" id="AK019461">
    <property type="protein sequence ID" value="BAB31733.1"/>
    <property type="molecule type" value="mRNA"/>
</dbReference>
<dbReference type="EMBL" id="AK030276">
    <property type="protein sequence ID" value="BAC26872.1"/>
    <property type="molecule type" value="mRNA"/>
</dbReference>
<dbReference type="CCDS" id="CCDS26405.1"/>
<dbReference type="RefSeq" id="NP_035250.1">
    <property type="nucleotide sequence ID" value="NM_011120.2"/>
</dbReference>
<dbReference type="SMR" id="P04769"/>
<dbReference type="FunCoup" id="P04769">
    <property type="interactions" value="181"/>
</dbReference>
<dbReference type="STRING" id="10090.ENSMUSP00000153033"/>
<dbReference type="PaxDb" id="10090-ENSMUSP00000021776"/>
<dbReference type="DNASU" id="18814"/>
<dbReference type="Ensembl" id="ENSMUST00000224026.2">
    <property type="protein sequence ID" value="ENSMUSP00000153033.2"/>
    <property type="gene ID" value="ENSMUSG00000021348.4"/>
</dbReference>
<dbReference type="GeneID" id="18814"/>
<dbReference type="KEGG" id="mmu:18814"/>
<dbReference type="UCSC" id="uc007pyb.2">
    <property type="organism name" value="mouse"/>
</dbReference>
<dbReference type="AGR" id="MGI:97619"/>
<dbReference type="CTD" id="18814"/>
<dbReference type="MGI" id="MGI:97619">
    <property type="gene designation" value="Prl7d1"/>
</dbReference>
<dbReference type="VEuPathDB" id="HostDB:ENSMUSG00000021348"/>
<dbReference type="eggNOG" id="ENOG502QYU3">
    <property type="taxonomic scope" value="Eukaryota"/>
</dbReference>
<dbReference type="GeneTree" id="ENSGT00950000182818"/>
<dbReference type="HOGENOM" id="CLU_088274_0_1_1"/>
<dbReference type="InParanoid" id="P04769"/>
<dbReference type="OMA" id="IVEFCIY"/>
<dbReference type="OrthoDB" id="9593551at2759"/>
<dbReference type="PhylomeDB" id="P04769"/>
<dbReference type="TreeFam" id="TF332592"/>
<dbReference type="BioGRID-ORCS" id="18814">
    <property type="hits" value="2 hits in 76 CRISPR screens"/>
</dbReference>
<dbReference type="ChiTaRS" id="Prl7d1">
    <property type="organism name" value="mouse"/>
</dbReference>
<dbReference type="PRO" id="PR:P04769"/>
<dbReference type="Proteomes" id="UP000000589">
    <property type="component" value="Chromosome 13"/>
</dbReference>
<dbReference type="RNAct" id="P04769">
    <property type="molecule type" value="protein"/>
</dbReference>
<dbReference type="Bgee" id="ENSMUSG00000021348">
    <property type="expression patterns" value="Expressed in placenta labyrinth and 34 other cell types or tissues"/>
</dbReference>
<dbReference type="ExpressionAtlas" id="P04769">
    <property type="expression patterns" value="baseline and differential"/>
</dbReference>
<dbReference type="GO" id="GO:0005615">
    <property type="term" value="C:extracellular space"/>
    <property type="evidence" value="ECO:0000314"/>
    <property type="project" value="MGI"/>
</dbReference>
<dbReference type="GO" id="GO:0005125">
    <property type="term" value="F:cytokine activity"/>
    <property type="evidence" value="ECO:0000314"/>
    <property type="project" value="MGI"/>
</dbReference>
<dbReference type="GO" id="GO:0005179">
    <property type="term" value="F:hormone activity"/>
    <property type="evidence" value="ECO:0000314"/>
    <property type="project" value="MGI"/>
</dbReference>
<dbReference type="GO" id="GO:0043534">
    <property type="term" value="P:blood vessel endothelial cell migration"/>
    <property type="evidence" value="ECO:0000314"/>
    <property type="project" value="MGI"/>
</dbReference>
<dbReference type="GO" id="GO:0016525">
    <property type="term" value="P:negative regulation of angiogenesis"/>
    <property type="evidence" value="ECO:0000314"/>
    <property type="project" value="MGI"/>
</dbReference>
<dbReference type="GO" id="GO:0043537">
    <property type="term" value="P:negative regulation of blood vessel endothelial cell migration"/>
    <property type="evidence" value="ECO:0000314"/>
    <property type="project" value="MGI"/>
</dbReference>
<dbReference type="GO" id="GO:0060674">
    <property type="term" value="P:placenta blood vessel development"/>
    <property type="evidence" value="ECO:0000315"/>
    <property type="project" value="MGI"/>
</dbReference>
<dbReference type="GO" id="GO:0001890">
    <property type="term" value="P:placenta development"/>
    <property type="evidence" value="ECO:0000315"/>
    <property type="project" value="MGI"/>
</dbReference>
<dbReference type="CDD" id="cd10288">
    <property type="entry name" value="prolactin_like"/>
    <property type="match status" value="1"/>
</dbReference>
<dbReference type="FunFam" id="1.20.1250.10:FF:000041">
    <property type="entry name" value="Growth hormone d20"/>
    <property type="match status" value="1"/>
</dbReference>
<dbReference type="Gene3D" id="1.20.1250.10">
    <property type="match status" value="1"/>
</dbReference>
<dbReference type="InterPro" id="IPR009079">
    <property type="entry name" value="4_helix_cytokine-like_core"/>
</dbReference>
<dbReference type="InterPro" id="IPR001400">
    <property type="entry name" value="Somatotropin/Prolactin"/>
</dbReference>
<dbReference type="InterPro" id="IPR018116">
    <property type="entry name" value="Somatotropin_CS"/>
</dbReference>
<dbReference type="PANTHER" id="PTHR11417:SF20">
    <property type="entry name" value="PROLACTIN-7D1"/>
    <property type="match status" value="1"/>
</dbReference>
<dbReference type="PANTHER" id="PTHR11417">
    <property type="entry name" value="SOMATOTROPIN,PROLACTIN"/>
    <property type="match status" value="1"/>
</dbReference>
<dbReference type="Pfam" id="PF00103">
    <property type="entry name" value="Hormone_1"/>
    <property type="match status" value="1"/>
</dbReference>
<dbReference type="PRINTS" id="PR00836">
    <property type="entry name" value="SOMATOTROPIN"/>
</dbReference>
<dbReference type="SUPFAM" id="SSF47266">
    <property type="entry name" value="4-helical cytokines"/>
    <property type="match status" value="1"/>
</dbReference>
<dbReference type="PROSITE" id="PS00266">
    <property type="entry name" value="SOMATOTROPIN_1"/>
    <property type="match status" value="1"/>
</dbReference>
<dbReference type="PROSITE" id="PS00338">
    <property type="entry name" value="SOMATOTROPIN_2"/>
    <property type="match status" value="1"/>
</dbReference>
<name>PR7D1_MOUSE</name>
<comment type="subcellular location">
    <subcellularLocation>
        <location>Secreted</location>
    </subcellularLocation>
</comment>
<comment type="developmental stage">
    <text>PRP mRNA levels are highest in the fetal part of the placenta and peak at day 12 of gestation, decreasing gradually until term.</text>
</comment>
<comment type="similarity">
    <text evidence="3">Belongs to the somatotropin/prolactin family.</text>
</comment>
<keyword id="KW-1015">Disulfide bond</keyword>
<keyword id="KW-0372">Hormone</keyword>
<keyword id="KW-1185">Reference proteome</keyword>
<keyword id="KW-0964">Secreted</keyword>
<keyword id="KW-0732">Signal</keyword>
<proteinExistence type="evidence at transcript level"/>
<accession>P04769</accession>
<sequence>MLPSLIQPCSSGTLLMLLMSNLFLWEKVSSAPINASEAVLSDLKDLFDNATVLSGEMSKLGVIMRKEFFMNSFSSETFNKIILDLHKSTENITKAFNSCHTVPINVPETVEDVRKTSFEEFLKMVLHMLLAWKEPLKHLVTELSALPECPYRILSKAEAIEAKNKDLLEYIIRIISKVNPAIKENEDYPTWSDLDSLKSADKETQFFALYMFSFCLRIDLETVDFLVNFLKCLLLYDDVCYSEF</sequence>